<reference key="1">
    <citation type="submission" date="2007-02" db="EMBL/GenBank/DDBJ databases">
        <title>Complete sequence of Clostridium thermocellum ATCC 27405.</title>
        <authorList>
            <consortium name="US DOE Joint Genome Institute"/>
            <person name="Copeland A."/>
            <person name="Lucas S."/>
            <person name="Lapidus A."/>
            <person name="Barry K."/>
            <person name="Detter J.C."/>
            <person name="Glavina del Rio T."/>
            <person name="Hammon N."/>
            <person name="Israni S."/>
            <person name="Dalin E."/>
            <person name="Tice H."/>
            <person name="Pitluck S."/>
            <person name="Chertkov O."/>
            <person name="Brettin T."/>
            <person name="Bruce D."/>
            <person name="Han C."/>
            <person name="Tapia R."/>
            <person name="Gilna P."/>
            <person name="Schmutz J."/>
            <person name="Larimer F."/>
            <person name="Land M."/>
            <person name="Hauser L."/>
            <person name="Kyrpides N."/>
            <person name="Mikhailova N."/>
            <person name="Wu J.H.D."/>
            <person name="Newcomb M."/>
            <person name="Richardson P."/>
        </authorList>
    </citation>
    <scope>NUCLEOTIDE SEQUENCE [LARGE SCALE GENOMIC DNA]</scope>
    <source>
        <strain>ATCC 27405 / DSM 1237 / JCM 9322 / NBRC 103400 / NCIMB 10682 / NRRL B-4536 / VPI 7372</strain>
    </source>
</reference>
<gene>
    <name evidence="1" type="primary">panC</name>
    <name type="ordered locus">Cthe_0901</name>
</gene>
<accession>A3DDV6</accession>
<sequence length="281" mass="31664">MRVIETISDLKAIIRTQKNLGRVIGLVPTMGYLHEGHLSLVNMSRQNNDYTVMSIFVNPTQFGPNEDFDRYPRDLERDLKLAEAAGVDVVFAPSVKEMYPDGYKTYVNVEGITEVLCGKSRPGHFRGVTTIVTKLFNIVEPHRAYFGQKDAQQVAVIKKMVKDLNMNVEIITCPIVREEDGLAMSSRNVYLSPEERKSAVILSKSLMEAEELIKKGETDAKKIRKYIIDRIQTEKNAVIDYVEVVNADTLENVDEIKGRVLVALAVKFGSTRLIDNVIVEV</sequence>
<keyword id="KW-0067">ATP-binding</keyword>
<keyword id="KW-0963">Cytoplasm</keyword>
<keyword id="KW-0436">Ligase</keyword>
<keyword id="KW-0547">Nucleotide-binding</keyword>
<keyword id="KW-0566">Pantothenate biosynthesis</keyword>
<keyword id="KW-1185">Reference proteome</keyword>
<dbReference type="EC" id="6.3.2.1" evidence="1"/>
<dbReference type="EMBL" id="CP000568">
    <property type="protein sequence ID" value="ABN52135.1"/>
    <property type="molecule type" value="Genomic_DNA"/>
</dbReference>
<dbReference type="RefSeq" id="WP_003517257.1">
    <property type="nucleotide sequence ID" value="NC_009012.1"/>
</dbReference>
<dbReference type="SMR" id="A3DDV6"/>
<dbReference type="STRING" id="203119.Cthe_0901"/>
<dbReference type="GeneID" id="35804650"/>
<dbReference type="KEGG" id="cth:Cthe_0901"/>
<dbReference type="eggNOG" id="COG0414">
    <property type="taxonomic scope" value="Bacteria"/>
</dbReference>
<dbReference type="HOGENOM" id="CLU_047148_0_0_9"/>
<dbReference type="OrthoDB" id="9773087at2"/>
<dbReference type="UniPathway" id="UPA00028">
    <property type="reaction ID" value="UER00005"/>
</dbReference>
<dbReference type="Proteomes" id="UP000002145">
    <property type="component" value="Chromosome"/>
</dbReference>
<dbReference type="GO" id="GO:0005829">
    <property type="term" value="C:cytosol"/>
    <property type="evidence" value="ECO:0007669"/>
    <property type="project" value="TreeGrafter"/>
</dbReference>
<dbReference type="GO" id="GO:0005524">
    <property type="term" value="F:ATP binding"/>
    <property type="evidence" value="ECO:0007669"/>
    <property type="project" value="UniProtKB-KW"/>
</dbReference>
<dbReference type="GO" id="GO:0004592">
    <property type="term" value="F:pantoate-beta-alanine ligase activity"/>
    <property type="evidence" value="ECO:0007669"/>
    <property type="project" value="UniProtKB-UniRule"/>
</dbReference>
<dbReference type="GO" id="GO:0015940">
    <property type="term" value="P:pantothenate biosynthetic process"/>
    <property type="evidence" value="ECO:0007669"/>
    <property type="project" value="UniProtKB-UniRule"/>
</dbReference>
<dbReference type="CDD" id="cd00560">
    <property type="entry name" value="PanC"/>
    <property type="match status" value="1"/>
</dbReference>
<dbReference type="FunFam" id="3.30.1300.10:FF:000001">
    <property type="entry name" value="Pantothenate synthetase"/>
    <property type="match status" value="1"/>
</dbReference>
<dbReference type="FunFam" id="3.40.50.620:FF:000013">
    <property type="entry name" value="Pantothenate synthetase"/>
    <property type="match status" value="1"/>
</dbReference>
<dbReference type="Gene3D" id="3.40.50.620">
    <property type="entry name" value="HUPs"/>
    <property type="match status" value="1"/>
</dbReference>
<dbReference type="Gene3D" id="3.30.1300.10">
    <property type="entry name" value="Pantoate-beta-alanine ligase, C-terminal domain"/>
    <property type="match status" value="1"/>
</dbReference>
<dbReference type="HAMAP" id="MF_00158">
    <property type="entry name" value="PanC"/>
    <property type="match status" value="1"/>
</dbReference>
<dbReference type="InterPro" id="IPR003721">
    <property type="entry name" value="Pantoate_ligase"/>
</dbReference>
<dbReference type="InterPro" id="IPR042176">
    <property type="entry name" value="Pantoate_ligase_C"/>
</dbReference>
<dbReference type="InterPro" id="IPR014729">
    <property type="entry name" value="Rossmann-like_a/b/a_fold"/>
</dbReference>
<dbReference type="NCBIfam" id="TIGR00018">
    <property type="entry name" value="panC"/>
    <property type="match status" value="1"/>
</dbReference>
<dbReference type="PANTHER" id="PTHR21299">
    <property type="entry name" value="CYTIDYLATE KINASE/PANTOATE-BETA-ALANINE LIGASE"/>
    <property type="match status" value="1"/>
</dbReference>
<dbReference type="PANTHER" id="PTHR21299:SF1">
    <property type="entry name" value="PANTOATE--BETA-ALANINE LIGASE"/>
    <property type="match status" value="1"/>
</dbReference>
<dbReference type="Pfam" id="PF02569">
    <property type="entry name" value="Pantoate_ligase"/>
    <property type="match status" value="1"/>
</dbReference>
<dbReference type="SUPFAM" id="SSF52374">
    <property type="entry name" value="Nucleotidylyl transferase"/>
    <property type="match status" value="1"/>
</dbReference>
<name>PANC_ACET2</name>
<protein>
    <recommendedName>
        <fullName evidence="1">Pantothenate synthetase</fullName>
        <shortName evidence="1">PS</shortName>
        <ecNumber evidence="1">6.3.2.1</ecNumber>
    </recommendedName>
    <alternativeName>
        <fullName evidence="1">Pantoate--beta-alanine ligase</fullName>
    </alternativeName>
    <alternativeName>
        <fullName evidence="1">Pantoate-activating enzyme</fullName>
    </alternativeName>
</protein>
<proteinExistence type="inferred from homology"/>
<evidence type="ECO:0000255" key="1">
    <source>
        <dbReference type="HAMAP-Rule" id="MF_00158"/>
    </source>
</evidence>
<organism>
    <name type="scientific">Acetivibrio thermocellus (strain ATCC 27405 / DSM 1237 / JCM 9322 / NBRC 103400 / NCIMB 10682 / NRRL B-4536 / VPI 7372)</name>
    <name type="common">Clostridium thermocellum</name>
    <dbReference type="NCBI Taxonomy" id="203119"/>
    <lineage>
        <taxon>Bacteria</taxon>
        <taxon>Bacillati</taxon>
        <taxon>Bacillota</taxon>
        <taxon>Clostridia</taxon>
        <taxon>Eubacteriales</taxon>
        <taxon>Oscillospiraceae</taxon>
        <taxon>Acetivibrio</taxon>
    </lineage>
</organism>
<comment type="function">
    <text evidence="1">Catalyzes the condensation of pantoate with beta-alanine in an ATP-dependent reaction via a pantoyl-adenylate intermediate.</text>
</comment>
<comment type="catalytic activity">
    <reaction evidence="1">
        <text>(R)-pantoate + beta-alanine + ATP = (R)-pantothenate + AMP + diphosphate + H(+)</text>
        <dbReference type="Rhea" id="RHEA:10912"/>
        <dbReference type="ChEBI" id="CHEBI:15378"/>
        <dbReference type="ChEBI" id="CHEBI:15980"/>
        <dbReference type="ChEBI" id="CHEBI:29032"/>
        <dbReference type="ChEBI" id="CHEBI:30616"/>
        <dbReference type="ChEBI" id="CHEBI:33019"/>
        <dbReference type="ChEBI" id="CHEBI:57966"/>
        <dbReference type="ChEBI" id="CHEBI:456215"/>
        <dbReference type="EC" id="6.3.2.1"/>
    </reaction>
</comment>
<comment type="pathway">
    <text evidence="1">Cofactor biosynthesis; (R)-pantothenate biosynthesis; (R)-pantothenate from (R)-pantoate and beta-alanine: step 1/1.</text>
</comment>
<comment type="subunit">
    <text evidence="1">Homodimer.</text>
</comment>
<comment type="subcellular location">
    <subcellularLocation>
        <location evidence="1">Cytoplasm</location>
    </subcellularLocation>
</comment>
<comment type="miscellaneous">
    <text evidence="1">The reaction proceeds by a bi uni uni bi ping pong mechanism.</text>
</comment>
<comment type="similarity">
    <text evidence="1">Belongs to the pantothenate synthetase family.</text>
</comment>
<feature type="chain" id="PRO_0000305428" description="Pantothenate synthetase">
    <location>
        <begin position="1"/>
        <end position="281"/>
    </location>
</feature>
<feature type="active site" description="Proton donor" evidence="1">
    <location>
        <position position="37"/>
    </location>
</feature>
<feature type="binding site" evidence="1">
    <location>
        <begin position="30"/>
        <end position="37"/>
    </location>
    <ligand>
        <name>ATP</name>
        <dbReference type="ChEBI" id="CHEBI:30616"/>
    </ligand>
</feature>
<feature type="binding site" evidence="1">
    <location>
        <position position="61"/>
    </location>
    <ligand>
        <name>(R)-pantoate</name>
        <dbReference type="ChEBI" id="CHEBI:15980"/>
    </ligand>
</feature>
<feature type="binding site" evidence="1">
    <location>
        <position position="61"/>
    </location>
    <ligand>
        <name>beta-alanine</name>
        <dbReference type="ChEBI" id="CHEBI:57966"/>
    </ligand>
</feature>
<feature type="binding site" evidence="1">
    <location>
        <begin position="147"/>
        <end position="150"/>
    </location>
    <ligand>
        <name>ATP</name>
        <dbReference type="ChEBI" id="CHEBI:30616"/>
    </ligand>
</feature>
<feature type="binding site" evidence="1">
    <location>
        <position position="153"/>
    </location>
    <ligand>
        <name>(R)-pantoate</name>
        <dbReference type="ChEBI" id="CHEBI:15980"/>
    </ligand>
</feature>
<feature type="binding site" evidence="1">
    <location>
        <position position="176"/>
    </location>
    <ligand>
        <name>ATP</name>
        <dbReference type="ChEBI" id="CHEBI:30616"/>
    </ligand>
</feature>
<feature type="binding site" evidence="1">
    <location>
        <begin position="184"/>
        <end position="187"/>
    </location>
    <ligand>
        <name>ATP</name>
        <dbReference type="ChEBI" id="CHEBI:30616"/>
    </ligand>
</feature>